<proteinExistence type="inferred from homology"/>
<organism>
    <name type="scientific">Salinibacter ruber (strain DSM 13855 / M31)</name>
    <dbReference type="NCBI Taxonomy" id="309807"/>
    <lineage>
        <taxon>Bacteria</taxon>
        <taxon>Pseudomonadati</taxon>
        <taxon>Rhodothermota</taxon>
        <taxon>Rhodothermia</taxon>
        <taxon>Rhodothermales</taxon>
        <taxon>Salinibacteraceae</taxon>
        <taxon>Salinibacter</taxon>
    </lineage>
</organism>
<comment type="function">
    <text evidence="1">This is one of the proteins that bind and probably mediate the attachment of the 5S RNA into the large ribosomal subunit, where it forms part of the central protuberance. In the 70S ribosome it contacts protein S13 of the 30S subunit (bridge B1b), connecting the 2 subunits; this bridge is implicated in subunit movement. Contacts the P site tRNA; the 5S rRNA and some of its associated proteins might help stabilize positioning of ribosome-bound tRNAs.</text>
</comment>
<comment type="subunit">
    <text evidence="1">Part of the 50S ribosomal subunit; part of the 5S rRNA/L5/L18/L25 subcomplex. Contacts the 5S rRNA and the P site tRNA. Forms a bridge to the 30S subunit in the 70S ribosome.</text>
</comment>
<comment type="similarity">
    <text evidence="1">Belongs to the universal ribosomal protein uL5 family.</text>
</comment>
<sequence>MADVPRLQKQYQDEVRPSLTDQFGYENPMEVPRLEKICVNRGVGEVSENQKALDQAVEEMRKITGQHPTIRRAKRSIASFDVREGMPVGVKVTLREARMYEFFDRLVTLALPNIRDFRGVPDRSFDGRGNYTLGIDEQIIFPEIDVDNVDRIDGMDITFVTDAETDEESYALLKGLGMPFVRRGDEEPAEA</sequence>
<protein>
    <recommendedName>
        <fullName evidence="1">Large ribosomal subunit protein uL5</fullName>
    </recommendedName>
    <alternativeName>
        <fullName evidence="2">50S ribosomal protein L5</fullName>
    </alternativeName>
</protein>
<evidence type="ECO:0000255" key="1">
    <source>
        <dbReference type="HAMAP-Rule" id="MF_01333"/>
    </source>
</evidence>
<evidence type="ECO:0000305" key="2"/>
<name>RL5_SALRD</name>
<feature type="chain" id="PRO_0000243059" description="Large ribosomal subunit protein uL5">
    <location>
        <begin position="1"/>
        <end position="191"/>
    </location>
</feature>
<gene>
    <name evidence="1" type="primary">rplE</name>
    <name type="ordered locus">SRU_1047</name>
</gene>
<reference key="1">
    <citation type="journal article" date="2005" name="Proc. Natl. Acad. Sci. U.S.A.">
        <title>The genome of Salinibacter ruber: convergence and gene exchange among hyperhalophilic bacteria and archaea.</title>
        <authorList>
            <person name="Mongodin E.F."/>
            <person name="Nelson K.E."/>
            <person name="Daugherty S."/>
            <person name="DeBoy R.T."/>
            <person name="Wister J."/>
            <person name="Khouri H."/>
            <person name="Weidman J."/>
            <person name="Walsh D.A."/>
            <person name="Papke R.T."/>
            <person name="Sanchez Perez G."/>
            <person name="Sharma A.K."/>
            <person name="Nesbo C.L."/>
            <person name="MacLeod D."/>
            <person name="Bapteste E."/>
            <person name="Doolittle W.F."/>
            <person name="Charlebois R.L."/>
            <person name="Legault B."/>
            <person name="Rodriguez-Valera F."/>
        </authorList>
    </citation>
    <scope>NUCLEOTIDE SEQUENCE [LARGE SCALE GENOMIC DNA]</scope>
    <source>
        <strain>DSM 13855 / CECT 5946 / M31</strain>
    </source>
</reference>
<accession>Q2S3Q2</accession>
<keyword id="KW-1185">Reference proteome</keyword>
<keyword id="KW-0687">Ribonucleoprotein</keyword>
<keyword id="KW-0689">Ribosomal protein</keyword>
<keyword id="KW-0694">RNA-binding</keyword>
<keyword id="KW-0699">rRNA-binding</keyword>
<keyword id="KW-0820">tRNA-binding</keyword>
<dbReference type="EMBL" id="CP000159">
    <property type="protein sequence ID" value="ABC45820.1"/>
    <property type="molecule type" value="Genomic_DNA"/>
</dbReference>
<dbReference type="RefSeq" id="WP_011403807.1">
    <property type="nucleotide sequence ID" value="NC_007677.1"/>
</dbReference>
<dbReference type="RefSeq" id="YP_445179.1">
    <property type="nucleotide sequence ID" value="NC_007677.1"/>
</dbReference>
<dbReference type="SMR" id="Q2S3Q2"/>
<dbReference type="STRING" id="309807.SRU_1047"/>
<dbReference type="EnsemblBacteria" id="ABC45820">
    <property type="protein sequence ID" value="ABC45820"/>
    <property type="gene ID" value="SRU_1047"/>
</dbReference>
<dbReference type="GeneID" id="83727976"/>
<dbReference type="KEGG" id="sru:SRU_1047"/>
<dbReference type="PATRIC" id="fig|309807.25.peg.1085"/>
<dbReference type="eggNOG" id="COG0094">
    <property type="taxonomic scope" value="Bacteria"/>
</dbReference>
<dbReference type="HOGENOM" id="CLU_061015_2_1_10"/>
<dbReference type="OrthoDB" id="9806626at2"/>
<dbReference type="Proteomes" id="UP000008674">
    <property type="component" value="Chromosome"/>
</dbReference>
<dbReference type="GO" id="GO:1990904">
    <property type="term" value="C:ribonucleoprotein complex"/>
    <property type="evidence" value="ECO:0007669"/>
    <property type="project" value="UniProtKB-KW"/>
</dbReference>
<dbReference type="GO" id="GO:0005840">
    <property type="term" value="C:ribosome"/>
    <property type="evidence" value="ECO:0007669"/>
    <property type="project" value="UniProtKB-KW"/>
</dbReference>
<dbReference type="GO" id="GO:0019843">
    <property type="term" value="F:rRNA binding"/>
    <property type="evidence" value="ECO:0007669"/>
    <property type="project" value="UniProtKB-UniRule"/>
</dbReference>
<dbReference type="GO" id="GO:0003735">
    <property type="term" value="F:structural constituent of ribosome"/>
    <property type="evidence" value="ECO:0007669"/>
    <property type="project" value="InterPro"/>
</dbReference>
<dbReference type="GO" id="GO:0000049">
    <property type="term" value="F:tRNA binding"/>
    <property type="evidence" value="ECO:0007669"/>
    <property type="project" value="UniProtKB-UniRule"/>
</dbReference>
<dbReference type="GO" id="GO:0006412">
    <property type="term" value="P:translation"/>
    <property type="evidence" value="ECO:0007669"/>
    <property type="project" value="UniProtKB-UniRule"/>
</dbReference>
<dbReference type="FunFam" id="3.30.1440.10:FF:000001">
    <property type="entry name" value="50S ribosomal protein L5"/>
    <property type="match status" value="1"/>
</dbReference>
<dbReference type="Gene3D" id="3.30.1440.10">
    <property type="match status" value="1"/>
</dbReference>
<dbReference type="HAMAP" id="MF_01333_B">
    <property type="entry name" value="Ribosomal_uL5_B"/>
    <property type="match status" value="1"/>
</dbReference>
<dbReference type="InterPro" id="IPR002132">
    <property type="entry name" value="Ribosomal_uL5"/>
</dbReference>
<dbReference type="InterPro" id="IPR020930">
    <property type="entry name" value="Ribosomal_uL5_bac-type"/>
</dbReference>
<dbReference type="InterPro" id="IPR031309">
    <property type="entry name" value="Ribosomal_uL5_C"/>
</dbReference>
<dbReference type="InterPro" id="IPR022803">
    <property type="entry name" value="Ribosomal_uL5_dom_sf"/>
</dbReference>
<dbReference type="InterPro" id="IPR031310">
    <property type="entry name" value="Ribosomal_uL5_N"/>
</dbReference>
<dbReference type="NCBIfam" id="NF000585">
    <property type="entry name" value="PRK00010.1"/>
    <property type="match status" value="1"/>
</dbReference>
<dbReference type="PANTHER" id="PTHR11994">
    <property type="entry name" value="60S RIBOSOMAL PROTEIN L11-RELATED"/>
    <property type="match status" value="1"/>
</dbReference>
<dbReference type="Pfam" id="PF00281">
    <property type="entry name" value="Ribosomal_L5"/>
    <property type="match status" value="1"/>
</dbReference>
<dbReference type="Pfam" id="PF00673">
    <property type="entry name" value="Ribosomal_L5_C"/>
    <property type="match status" value="1"/>
</dbReference>
<dbReference type="PIRSF" id="PIRSF002161">
    <property type="entry name" value="Ribosomal_L5"/>
    <property type="match status" value="1"/>
</dbReference>
<dbReference type="SUPFAM" id="SSF55282">
    <property type="entry name" value="RL5-like"/>
    <property type="match status" value="1"/>
</dbReference>